<evidence type="ECO:0000255" key="1">
    <source>
        <dbReference type="HAMAP-Rule" id="MF_00473"/>
    </source>
</evidence>
<comment type="function">
    <text evidence="1">Catalyzes the reversible isomerization of glucose-6-phosphate to fructose-6-phosphate.</text>
</comment>
<comment type="catalytic activity">
    <reaction evidence="1">
        <text>alpha-D-glucose 6-phosphate = beta-D-fructose 6-phosphate</text>
        <dbReference type="Rhea" id="RHEA:11816"/>
        <dbReference type="ChEBI" id="CHEBI:57634"/>
        <dbReference type="ChEBI" id="CHEBI:58225"/>
        <dbReference type="EC" id="5.3.1.9"/>
    </reaction>
</comment>
<comment type="pathway">
    <text evidence="1">Carbohydrate biosynthesis; gluconeogenesis.</text>
</comment>
<comment type="pathway">
    <text evidence="1">Carbohydrate degradation; glycolysis; D-glyceraldehyde 3-phosphate and glycerone phosphate from D-glucose: step 2/4.</text>
</comment>
<comment type="subcellular location">
    <subcellularLocation>
        <location evidence="1">Cytoplasm</location>
    </subcellularLocation>
</comment>
<comment type="similarity">
    <text evidence="1">Belongs to the GPI family.</text>
</comment>
<name>G6PI_PECCP</name>
<keyword id="KW-0963">Cytoplasm</keyword>
<keyword id="KW-0312">Gluconeogenesis</keyword>
<keyword id="KW-0324">Glycolysis</keyword>
<keyword id="KW-0413">Isomerase</keyword>
<protein>
    <recommendedName>
        <fullName evidence="1">Glucose-6-phosphate isomerase</fullName>
        <shortName evidence="1">GPI</shortName>
        <ecNumber evidence="1">5.3.1.9</ecNumber>
    </recommendedName>
    <alternativeName>
        <fullName evidence="1">Phosphoglucose isomerase</fullName>
        <shortName evidence="1">PGI</shortName>
    </alternativeName>
    <alternativeName>
        <fullName evidence="1">Phosphohexose isomerase</fullName>
        <shortName evidence="1">PHI</shortName>
    </alternativeName>
</protein>
<accession>C6DFP4</accession>
<sequence>MKNINPSQTAAWQALQHHFDAMKEVQISELFAQDSDRFAHFSATFDDLMLVDYSKNRITTETMEKLHALARETDLSAAIQSMFAGEKINRTEDRAVLHVALRNRSNTPILVDGKDVMPEVNAVLAKMKDFSERVIGGEWKGYTGKTITDVVNIGIGGSDLGPFMVTEALKPYKNHLNMHFVSNVDGTHIAETLKPLNPETTLFLVASKTFTTQETMTNAHSARDWFLNTAKDEKHVAKHFAALSTNAKAVGEFGIDTNNMFEFWDWVGGRYSLWSAIGLSIILSLGFENFEKLLSGAHAMDKHFASTPAEKNLPVLLALIGIWYNNFFGAETEAILPYDQYMHRFAAYFQQGNMESNGKSADRNGNPVDYQTGPIIWGEPGTNGQHAFYQLIHQGTKLIPCDFIAPAVSHNPLSDHHSKLLSNFFAQTEALAFGKSRDVVEAEFAAAGKSAKDVEHVAPFKVFEGNRPTNSILLREITPYSLGALIALYEHKIFTQGAILNIFTFDQWGVELGKQLANRILPELENDSTIDSHDSSTNGLINRFKAWRN</sequence>
<feature type="chain" id="PRO_1000206369" description="Glucose-6-phosphate isomerase">
    <location>
        <begin position="1"/>
        <end position="549"/>
    </location>
</feature>
<feature type="active site" description="Proton donor" evidence="1">
    <location>
        <position position="355"/>
    </location>
</feature>
<feature type="active site" evidence="1">
    <location>
        <position position="386"/>
    </location>
</feature>
<feature type="active site" evidence="1">
    <location>
        <position position="514"/>
    </location>
</feature>
<gene>
    <name evidence="1" type="primary">pgi</name>
    <name type="ordered locus">PC1_3768</name>
</gene>
<organism>
    <name type="scientific">Pectobacterium carotovorum subsp. carotovorum (strain PC1)</name>
    <dbReference type="NCBI Taxonomy" id="561230"/>
    <lineage>
        <taxon>Bacteria</taxon>
        <taxon>Pseudomonadati</taxon>
        <taxon>Pseudomonadota</taxon>
        <taxon>Gammaproteobacteria</taxon>
        <taxon>Enterobacterales</taxon>
        <taxon>Pectobacteriaceae</taxon>
        <taxon>Pectobacterium</taxon>
    </lineage>
</organism>
<dbReference type="EC" id="5.3.1.9" evidence="1"/>
<dbReference type="EMBL" id="CP001657">
    <property type="protein sequence ID" value="ACT14783.1"/>
    <property type="molecule type" value="Genomic_DNA"/>
</dbReference>
<dbReference type="RefSeq" id="WP_015841894.1">
    <property type="nucleotide sequence ID" value="NC_012917.1"/>
</dbReference>
<dbReference type="SMR" id="C6DFP4"/>
<dbReference type="STRING" id="561230.PC1_3768"/>
<dbReference type="KEGG" id="pct:PC1_3768"/>
<dbReference type="eggNOG" id="COG0166">
    <property type="taxonomic scope" value="Bacteria"/>
</dbReference>
<dbReference type="HOGENOM" id="CLU_017947_3_1_6"/>
<dbReference type="OrthoDB" id="140919at2"/>
<dbReference type="UniPathway" id="UPA00109">
    <property type="reaction ID" value="UER00181"/>
</dbReference>
<dbReference type="UniPathway" id="UPA00138"/>
<dbReference type="Proteomes" id="UP000002736">
    <property type="component" value="Chromosome"/>
</dbReference>
<dbReference type="GO" id="GO:0005829">
    <property type="term" value="C:cytosol"/>
    <property type="evidence" value="ECO:0007669"/>
    <property type="project" value="TreeGrafter"/>
</dbReference>
<dbReference type="GO" id="GO:0097367">
    <property type="term" value="F:carbohydrate derivative binding"/>
    <property type="evidence" value="ECO:0007669"/>
    <property type="project" value="InterPro"/>
</dbReference>
<dbReference type="GO" id="GO:0004347">
    <property type="term" value="F:glucose-6-phosphate isomerase activity"/>
    <property type="evidence" value="ECO:0007669"/>
    <property type="project" value="UniProtKB-UniRule"/>
</dbReference>
<dbReference type="GO" id="GO:0048029">
    <property type="term" value="F:monosaccharide binding"/>
    <property type="evidence" value="ECO:0007669"/>
    <property type="project" value="TreeGrafter"/>
</dbReference>
<dbReference type="GO" id="GO:0006094">
    <property type="term" value="P:gluconeogenesis"/>
    <property type="evidence" value="ECO:0007669"/>
    <property type="project" value="UniProtKB-UniRule"/>
</dbReference>
<dbReference type="GO" id="GO:0051156">
    <property type="term" value="P:glucose 6-phosphate metabolic process"/>
    <property type="evidence" value="ECO:0007669"/>
    <property type="project" value="TreeGrafter"/>
</dbReference>
<dbReference type="GO" id="GO:0006096">
    <property type="term" value="P:glycolytic process"/>
    <property type="evidence" value="ECO:0007669"/>
    <property type="project" value="UniProtKB-UniRule"/>
</dbReference>
<dbReference type="CDD" id="cd05015">
    <property type="entry name" value="SIS_PGI_1"/>
    <property type="match status" value="1"/>
</dbReference>
<dbReference type="CDD" id="cd05016">
    <property type="entry name" value="SIS_PGI_2"/>
    <property type="match status" value="1"/>
</dbReference>
<dbReference type="FunFam" id="1.10.1390.10:FF:000001">
    <property type="entry name" value="Glucose-6-phosphate isomerase"/>
    <property type="match status" value="1"/>
</dbReference>
<dbReference type="FunFam" id="3.40.50.10490:FF:000004">
    <property type="entry name" value="Glucose-6-phosphate isomerase"/>
    <property type="match status" value="1"/>
</dbReference>
<dbReference type="Gene3D" id="1.10.1390.10">
    <property type="match status" value="1"/>
</dbReference>
<dbReference type="Gene3D" id="3.40.50.10490">
    <property type="entry name" value="Glucose-6-phosphate isomerase like protein, domain 1"/>
    <property type="match status" value="2"/>
</dbReference>
<dbReference type="HAMAP" id="MF_00473">
    <property type="entry name" value="G6P_isomerase"/>
    <property type="match status" value="1"/>
</dbReference>
<dbReference type="InterPro" id="IPR001672">
    <property type="entry name" value="G6P_Isomerase"/>
</dbReference>
<dbReference type="InterPro" id="IPR023096">
    <property type="entry name" value="G6P_Isomerase_C"/>
</dbReference>
<dbReference type="InterPro" id="IPR018189">
    <property type="entry name" value="Phosphoglucose_isomerase_CS"/>
</dbReference>
<dbReference type="InterPro" id="IPR046348">
    <property type="entry name" value="SIS_dom_sf"/>
</dbReference>
<dbReference type="InterPro" id="IPR035476">
    <property type="entry name" value="SIS_PGI_1"/>
</dbReference>
<dbReference type="InterPro" id="IPR035482">
    <property type="entry name" value="SIS_PGI_2"/>
</dbReference>
<dbReference type="NCBIfam" id="NF001211">
    <property type="entry name" value="PRK00179.1"/>
    <property type="match status" value="1"/>
</dbReference>
<dbReference type="PANTHER" id="PTHR11469">
    <property type="entry name" value="GLUCOSE-6-PHOSPHATE ISOMERASE"/>
    <property type="match status" value="1"/>
</dbReference>
<dbReference type="PANTHER" id="PTHR11469:SF1">
    <property type="entry name" value="GLUCOSE-6-PHOSPHATE ISOMERASE"/>
    <property type="match status" value="1"/>
</dbReference>
<dbReference type="Pfam" id="PF00342">
    <property type="entry name" value="PGI"/>
    <property type="match status" value="1"/>
</dbReference>
<dbReference type="PRINTS" id="PR00662">
    <property type="entry name" value="G6PISOMERASE"/>
</dbReference>
<dbReference type="SUPFAM" id="SSF53697">
    <property type="entry name" value="SIS domain"/>
    <property type="match status" value="1"/>
</dbReference>
<dbReference type="PROSITE" id="PS00765">
    <property type="entry name" value="P_GLUCOSE_ISOMERASE_1"/>
    <property type="match status" value="1"/>
</dbReference>
<dbReference type="PROSITE" id="PS00174">
    <property type="entry name" value="P_GLUCOSE_ISOMERASE_2"/>
    <property type="match status" value="1"/>
</dbReference>
<dbReference type="PROSITE" id="PS51463">
    <property type="entry name" value="P_GLUCOSE_ISOMERASE_3"/>
    <property type="match status" value="1"/>
</dbReference>
<reference key="1">
    <citation type="submission" date="2009-07" db="EMBL/GenBank/DDBJ databases">
        <title>Complete sequence of Pectobacterium carotovorum subsp. carotovorum PC1.</title>
        <authorList>
            <consortium name="US DOE Joint Genome Institute"/>
            <person name="Lucas S."/>
            <person name="Copeland A."/>
            <person name="Lapidus A."/>
            <person name="Glavina del Rio T."/>
            <person name="Tice H."/>
            <person name="Bruce D."/>
            <person name="Goodwin L."/>
            <person name="Pitluck S."/>
            <person name="Munk A.C."/>
            <person name="Brettin T."/>
            <person name="Detter J.C."/>
            <person name="Han C."/>
            <person name="Tapia R."/>
            <person name="Larimer F."/>
            <person name="Land M."/>
            <person name="Hauser L."/>
            <person name="Kyrpides N."/>
            <person name="Mikhailova N."/>
            <person name="Balakrishnan V."/>
            <person name="Glasner J."/>
            <person name="Perna N.T."/>
        </authorList>
    </citation>
    <scope>NUCLEOTIDE SEQUENCE [LARGE SCALE GENOMIC DNA]</scope>
    <source>
        <strain>PC1</strain>
    </source>
</reference>
<proteinExistence type="inferred from homology"/>